<reference key="1">
    <citation type="submission" date="2007-08" db="EMBL/GenBank/DDBJ databases">
        <title>Complete sequence of Shewanella sediminis HAW-EB3.</title>
        <authorList>
            <consortium name="US DOE Joint Genome Institute"/>
            <person name="Copeland A."/>
            <person name="Lucas S."/>
            <person name="Lapidus A."/>
            <person name="Barry K."/>
            <person name="Glavina del Rio T."/>
            <person name="Dalin E."/>
            <person name="Tice H."/>
            <person name="Pitluck S."/>
            <person name="Chertkov O."/>
            <person name="Brettin T."/>
            <person name="Bruce D."/>
            <person name="Detter J.C."/>
            <person name="Han C."/>
            <person name="Schmutz J."/>
            <person name="Larimer F."/>
            <person name="Land M."/>
            <person name="Hauser L."/>
            <person name="Kyrpides N."/>
            <person name="Kim E."/>
            <person name="Zhao J.-S."/>
            <person name="Richardson P."/>
        </authorList>
    </citation>
    <scope>NUCLEOTIDE SEQUENCE [LARGE SCALE GENOMIC DNA]</scope>
    <source>
        <strain>HAW-EB3</strain>
    </source>
</reference>
<sequence length="545" mass="59958">MTTRYIFVTGGVVSSLGKGIAAASLAAILEARGLNVTMMKLDPYINVDPGTMSPTQHGEVFVTEDGAETDLDLGHYERFIRTKMNRRNNFTTGRIYEEVLRKERRGDYLGATIQIIPHITNAIKEKVLAGGEGHDVAIVEIGGTVGDIESLPFLESIRQLSVELGRERSLFMHLTLVPFLGAAGEVKTKPTQHSVKELRSIGIAPDVLVCRGDRPVPANEKAKISLFCNVEERAVISLKDVDSIYKIPALLKAQGLDELVVKRFGITCPEADLHEWEQVIYQEANPTGEVTIGMVGKYIELPDAYKSVNEALKHAGLFNRVSVNIKYIDSQTVEAKGEEVLQGLDGILVPGGFGERGVEGKILAAKYARENNLPYFGICLGLQVALIEFARHVAGLEGAHSTEFNKETPHPVVGLITEWINEEGNVEQRHETSDLGGTMRLGAQLCHLSEGSKAAISYDGNTCVERHRHRYEVNNNYKDRLEKAGLVFSGLSSDRQLVEMIELPNHPWFVAGQFHPEFTSTPRDGQPLFVGFVAAATAYQKRDLG</sequence>
<gene>
    <name evidence="1" type="primary">pyrG</name>
    <name type="ordered locus">Ssed_1289</name>
</gene>
<name>PYRG_SHESH</name>
<accession>A8FSS7</accession>
<feature type="chain" id="PRO_1000139576" description="CTP synthase">
    <location>
        <begin position="1"/>
        <end position="545"/>
    </location>
</feature>
<feature type="domain" description="Glutamine amidotransferase type-1" evidence="1">
    <location>
        <begin position="291"/>
        <end position="542"/>
    </location>
</feature>
<feature type="region of interest" description="Amidoligase domain" evidence="1">
    <location>
        <begin position="1"/>
        <end position="266"/>
    </location>
</feature>
<feature type="active site" description="Nucleophile; for glutamine hydrolysis" evidence="1">
    <location>
        <position position="379"/>
    </location>
</feature>
<feature type="active site" evidence="1">
    <location>
        <position position="515"/>
    </location>
</feature>
<feature type="active site" evidence="1">
    <location>
        <position position="517"/>
    </location>
</feature>
<feature type="binding site" evidence="1">
    <location>
        <position position="14"/>
    </location>
    <ligand>
        <name>CTP</name>
        <dbReference type="ChEBI" id="CHEBI:37563"/>
        <note>allosteric inhibitor</note>
    </ligand>
</feature>
<feature type="binding site" evidence="1">
    <location>
        <position position="14"/>
    </location>
    <ligand>
        <name>UTP</name>
        <dbReference type="ChEBI" id="CHEBI:46398"/>
    </ligand>
</feature>
<feature type="binding site" evidence="1">
    <location>
        <begin position="15"/>
        <end position="20"/>
    </location>
    <ligand>
        <name>ATP</name>
        <dbReference type="ChEBI" id="CHEBI:30616"/>
    </ligand>
</feature>
<feature type="binding site" evidence="1">
    <location>
        <position position="72"/>
    </location>
    <ligand>
        <name>ATP</name>
        <dbReference type="ChEBI" id="CHEBI:30616"/>
    </ligand>
</feature>
<feature type="binding site" evidence="1">
    <location>
        <position position="72"/>
    </location>
    <ligand>
        <name>Mg(2+)</name>
        <dbReference type="ChEBI" id="CHEBI:18420"/>
    </ligand>
</feature>
<feature type="binding site" evidence="1">
    <location>
        <position position="140"/>
    </location>
    <ligand>
        <name>Mg(2+)</name>
        <dbReference type="ChEBI" id="CHEBI:18420"/>
    </ligand>
</feature>
<feature type="binding site" evidence="1">
    <location>
        <begin position="147"/>
        <end position="149"/>
    </location>
    <ligand>
        <name>CTP</name>
        <dbReference type="ChEBI" id="CHEBI:37563"/>
        <note>allosteric inhibitor</note>
    </ligand>
</feature>
<feature type="binding site" evidence="1">
    <location>
        <begin position="187"/>
        <end position="192"/>
    </location>
    <ligand>
        <name>CTP</name>
        <dbReference type="ChEBI" id="CHEBI:37563"/>
        <note>allosteric inhibitor</note>
    </ligand>
</feature>
<feature type="binding site" evidence="1">
    <location>
        <begin position="187"/>
        <end position="192"/>
    </location>
    <ligand>
        <name>UTP</name>
        <dbReference type="ChEBI" id="CHEBI:46398"/>
    </ligand>
</feature>
<feature type="binding site" evidence="1">
    <location>
        <position position="223"/>
    </location>
    <ligand>
        <name>CTP</name>
        <dbReference type="ChEBI" id="CHEBI:37563"/>
        <note>allosteric inhibitor</note>
    </ligand>
</feature>
<feature type="binding site" evidence="1">
    <location>
        <position position="223"/>
    </location>
    <ligand>
        <name>UTP</name>
        <dbReference type="ChEBI" id="CHEBI:46398"/>
    </ligand>
</feature>
<feature type="binding site" evidence="1">
    <location>
        <begin position="239"/>
        <end position="241"/>
    </location>
    <ligand>
        <name>ATP</name>
        <dbReference type="ChEBI" id="CHEBI:30616"/>
    </ligand>
</feature>
<feature type="binding site" evidence="1">
    <location>
        <position position="352"/>
    </location>
    <ligand>
        <name>L-glutamine</name>
        <dbReference type="ChEBI" id="CHEBI:58359"/>
    </ligand>
</feature>
<feature type="binding site" evidence="1">
    <location>
        <begin position="380"/>
        <end position="383"/>
    </location>
    <ligand>
        <name>L-glutamine</name>
        <dbReference type="ChEBI" id="CHEBI:58359"/>
    </ligand>
</feature>
<feature type="binding site" evidence="1">
    <location>
        <position position="403"/>
    </location>
    <ligand>
        <name>L-glutamine</name>
        <dbReference type="ChEBI" id="CHEBI:58359"/>
    </ligand>
</feature>
<feature type="binding site" evidence="1">
    <location>
        <position position="470"/>
    </location>
    <ligand>
        <name>L-glutamine</name>
        <dbReference type="ChEBI" id="CHEBI:58359"/>
    </ligand>
</feature>
<proteinExistence type="inferred from homology"/>
<organism>
    <name type="scientific">Shewanella sediminis (strain HAW-EB3)</name>
    <dbReference type="NCBI Taxonomy" id="425104"/>
    <lineage>
        <taxon>Bacteria</taxon>
        <taxon>Pseudomonadati</taxon>
        <taxon>Pseudomonadota</taxon>
        <taxon>Gammaproteobacteria</taxon>
        <taxon>Alteromonadales</taxon>
        <taxon>Shewanellaceae</taxon>
        <taxon>Shewanella</taxon>
    </lineage>
</organism>
<keyword id="KW-0067">ATP-binding</keyword>
<keyword id="KW-0315">Glutamine amidotransferase</keyword>
<keyword id="KW-0436">Ligase</keyword>
<keyword id="KW-0460">Magnesium</keyword>
<keyword id="KW-0479">Metal-binding</keyword>
<keyword id="KW-0547">Nucleotide-binding</keyword>
<keyword id="KW-0665">Pyrimidine biosynthesis</keyword>
<keyword id="KW-1185">Reference proteome</keyword>
<dbReference type="EC" id="6.3.4.2" evidence="1"/>
<dbReference type="EMBL" id="CP000821">
    <property type="protein sequence ID" value="ABV35900.1"/>
    <property type="molecule type" value="Genomic_DNA"/>
</dbReference>
<dbReference type="RefSeq" id="WP_012141636.1">
    <property type="nucleotide sequence ID" value="NC_009831.1"/>
</dbReference>
<dbReference type="SMR" id="A8FSS7"/>
<dbReference type="STRING" id="425104.Ssed_1289"/>
<dbReference type="MEROPS" id="C26.964"/>
<dbReference type="KEGG" id="sse:Ssed_1289"/>
<dbReference type="eggNOG" id="COG0504">
    <property type="taxonomic scope" value="Bacteria"/>
</dbReference>
<dbReference type="HOGENOM" id="CLU_011675_5_0_6"/>
<dbReference type="OrthoDB" id="9801107at2"/>
<dbReference type="UniPathway" id="UPA00159">
    <property type="reaction ID" value="UER00277"/>
</dbReference>
<dbReference type="Proteomes" id="UP000002015">
    <property type="component" value="Chromosome"/>
</dbReference>
<dbReference type="GO" id="GO:0005829">
    <property type="term" value="C:cytosol"/>
    <property type="evidence" value="ECO:0007669"/>
    <property type="project" value="TreeGrafter"/>
</dbReference>
<dbReference type="GO" id="GO:0005524">
    <property type="term" value="F:ATP binding"/>
    <property type="evidence" value="ECO:0007669"/>
    <property type="project" value="UniProtKB-KW"/>
</dbReference>
<dbReference type="GO" id="GO:0003883">
    <property type="term" value="F:CTP synthase activity"/>
    <property type="evidence" value="ECO:0007669"/>
    <property type="project" value="UniProtKB-UniRule"/>
</dbReference>
<dbReference type="GO" id="GO:0004359">
    <property type="term" value="F:glutaminase activity"/>
    <property type="evidence" value="ECO:0007669"/>
    <property type="project" value="RHEA"/>
</dbReference>
<dbReference type="GO" id="GO:0042802">
    <property type="term" value="F:identical protein binding"/>
    <property type="evidence" value="ECO:0007669"/>
    <property type="project" value="TreeGrafter"/>
</dbReference>
<dbReference type="GO" id="GO:0046872">
    <property type="term" value="F:metal ion binding"/>
    <property type="evidence" value="ECO:0007669"/>
    <property type="project" value="UniProtKB-KW"/>
</dbReference>
<dbReference type="GO" id="GO:0044210">
    <property type="term" value="P:'de novo' CTP biosynthetic process"/>
    <property type="evidence" value="ECO:0007669"/>
    <property type="project" value="UniProtKB-UniRule"/>
</dbReference>
<dbReference type="GO" id="GO:0019856">
    <property type="term" value="P:pyrimidine nucleobase biosynthetic process"/>
    <property type="evidence" value="ECO:0007669"/>
    <property type="project" value="TreeGrafter"/>
</dbReference>
<dbReference type="CDD" id="cd03113">
    <property type="entry name" value="CTPS_N"/>
    <property type="match status" value="1"/>
</dbReference>
<dbReference type="CDD" id="cd01746">
    <property type="entry name" value="GATase1_CTP_Synthase"/>
    <property type="match status" value="1"/>
</dbReference>
<dbReference type="FunFam" id="3.40.50.300:FF:000009">
    <property type="entry name" value="CTP synthase"/>
    <property type="match status" value="1"/>
</dbReference>
<dbReference type="FunFam" id="3.40.50.880:FF:000002">
    <property type="entry name" value="CTP synthase"/>
    <property type="match status" value="1"/>
</dbReference>
<dbReference type="Gene3D" id="3.40.50.880">
    <property type="match status" value="1"/>
</dbReference>
<dbReference type="Gene3D" id="3.40.50.300">
    <property type="entry name" value="P-loop containing nucleotide triphosphate hydrolases"/>
    <property type="match status" value="1"/>
</dbReference>
<dbReference type="HAMAP" id="MF_01227">
    <property type="entry name" value="PyrG"/>
    <property type="match status" value="1"/>
</dbReference>
<dbReference type="InterPro" id="IPR029062">
    <property type="entry name" value="Class_I_gatase-like"/>
</dbReference>
<dbReference type="InterPro" id="IPR004468">
    <property type="entry name" value="CTP_synthase"/>
</dbReference>
<dbReference type="InterPro" id="IPR017456">
    <property type="entry name" value="CTP_synthase_N"/>
</dbReference>
<dbReference type="InterPro" id="IPR017926">
    <property type="entry name" value="GATASE"/>
</dbReference>
<dbReference type="InterPro" id="IPR033828">
    <property type="entry name" value="GATase1_CTP_Synthase"/>
</dbReference>
<dbReference type="InterPro" id="IPR027417">
    <property type="entry name" value="P-loop_NTPase"/>
</dbReference>
<dbReference type="NCBIfam" id="NF003792">
    <property type="entry name" value="PRK05380.1"/>
    <property type="match status" value="1"/>
</dbReference>
<dbReference type="NCBIfam" id="TIGR00337">
    <property type="entry name" value="PyrG"/>
    <property type="match status" value="1"/>
</dbReference>
<dbReference type="PANTHER" id="PTHR11550">
    <property type="entry name" value="CTP SYNTHASE"/>
    <property type="match status" value="1"/>
</dbReference>
<dbReference type="PANTHER" id="PTHR11550:SF0">
    <property type="entry name" value="CTP SYNTHASE-RELATED"/>
    <property type="match status" value="1"/>
</dbReference>
<dbReference type="Pfam" id="PF06418">
    <property type="entry name" value="CTP_synth_N"/>
    <property type="match status" value="1"/>
</dbReference>
<dbReference type="Pfam" id="PF00117">
    <property type="entry name" value="GATase"/>
    <property type="match status" value="1"/>
</dbReference>
<dbReference type="SUPFAM" id="SSF52317">
    <property type="entry name" value="Class I glutamine amidotransferase-like"/>
    <property type="match status" value="1"/>
</dbReference>
<dbReference type="SUPFAM" id="SSF52540">
    <property type="entry name" value="P-loop containing nucleoside triphosphate hydrolases"/>
    <property type="match status" value="1"/>
</dbReference>
<dbReference type="PROSITE" id="PS51273">
    <property type="entry name" value="GATASE_TYPE_1"/>
    <property type="match status" value="1"/>
</dbReference>
<evidence type="ECO:0000255" key="1">
    <source>
        <dbReference type="HAMAP-Rule" id="MF_01227"/>
    </source>
</evidence>
<protein>
    <recommendedName>
        <fullName evidence="1">CTP synthase</fullName>
        <ecNumber evidence="1">6.3.4.2</ecNumber>
    </recommendedName>
    <alternativeName>
        <fullName evidence="1">Cytidine 5'-triphosphate synthase</fullName>
    </alternativeName>
    <alternativeName>
        <fullName evidence="1">Cytidine triphosphate synthetase</fullName>
        <shortName evidence="1">CTP synthetase</shortName>
        <shortName evidence="1">CTPS</shortName>
    </alternativeName>
    <alternativeName>
        <fullName evidence="1">UTP--ammonia ligase</fullName>
    </alternativeName>
</protein>
<comment type="function">
    <text evidence="1">Catalyzes the ATP-dependent amination of UTP to CTP with either L-glutamine or ammonia as the source of nitrogen. Regulates intracellular CTP levels through interactions with the four ribonucleotide triphosphates.</text>
</comment>
<comment type="catalytic activity">
    <reaction evidence="1">
        <text>UTP + L-glutamine + ATP + H2O = CTP + L-glutamate + ADP + phosphate + 2 H(+)</text>
        <dbReference type="Rhea" id="RHEA:26426"/>
        <dbReference type="ChEBI" id="CHEBI:15377"/>
        <dbReference type="ChEBI" id="CHEBI:15378"/>
        <dbReference type="ChEBI" id="CHEBI:29985"/>
        <dbReference type="ChEBI" id="CHEBI:30616"/>
        <dbReference type="ChEBI" id="CHEBI:37563"/>
        <dbReference type="ChEBI" id="CHEBI:43474"/>
        <dbReference type="ChEBI" id="CHEBI:46398"/>
        <dbReference type="ChEBI" id="CHEBI:58359"/>
        <dbReference type="ChEBI" id="CHEBI:456216"/>
        <dbReference type="EC" id="6.3.4.2"/>
    </reaction>
</comment>
<comment type="catalytic activity">
    <reaction evidence="1">
        <text>L-glutamine + H2O = L-glutamate + NH4(+)</text>
        <dbReference type="Rhea" id="RHEA:15889"/>
        <dbReference type="ChEBI" id="CHEBI:15377"/>
        <dbReference type="ChEBI" id="CHEBI:28938"/>
        <dbReference type="ChEBI" id="CHEBI:29985"/>
        <dbReference type="ChEBI" id="CHEBI:58359"/>
    </reaction>
</comment>
<comment type="catalytic activity">
    <reaction evidence="1">
        <text>UTP + NH4(+) + ATP = CTP + ADP + phosphate + 2 H(+)</text>
        <dbReference type="Rhea" id="RHEA:16597"/>
        <dbReference type="ChEBI" id="CHEBI:15378"/>
        <dbReference type="ChEBI" id="CHEBI:28938"/>
        <dbReference type="ChEBI" id="CHEBI:30616"/>
        <dbReference type="ChEBI" id="CHEBI:37563"/>
        <dbReference type="ChEBI" id="CHEBI:43474"/>
        <dbReference type="ChEBI" id="CHEBI:46398"/>
        <dbReference type="ChEBI" id="CHEBI:456216"/>
    </reaction>
</comment>
<comment type="activity regulation">
    <text evidence="1">Allosterically activated by GTP, when glutamine is the substrate; GTP has no effect on the reaction when ammonia is the substrate. The allosteric effector GTP functions by stabilizing the protein conformation that binds the tetrahedral intermediate(s) formed during glutamine hydrolysis. Inhibited by the product CTP, via allosteric rather than competitive inhibition.</text>
</comment>
<comment type="pathway">
    <text evidence="1">Pyrimidine metabolism; CTP biosynthesis via de novo pathway; CTP from UDP: step 2/2.</text>
</comment>
<comment type="subunit">
    <text evidence="1">Homotetramer.</text>
</comment>
<comment type="miscellaneous">
    <text evidence="1">CTPSs have evolved a hybrid strategy for distinguishing between UTP and CTP. The overlapping regions of the product feedback inhibitory and substrate sites recognize a common feature in both compounds, the triphosphate moiety. To differentiate isosteric substrate and product pyrimidine rings, an additional pocket far from the expected kinase/ligase catalytic site, specifically recognizes the cytosine and ribose portions of the product inhibitor.</text>
</comment>
<comment type="similarity">
    <text evidence="1">Belongs to the CTP synthase family.</text>
</comment>